<feature type="chain" id="PRO_1000023766" description="Transcription antitermination protein NusB">
    <location>
        <begin position="1"/>
        <end position="156"/>
    </location>
</feature>
<proteinExistence type="inferred from homology"/>
<protein>
    <recommendedName>
        <fullName evidence="1">Transcription antitermination protein NusB</fullName>
    </recommendedName>
    <alternativeName>
        <fullName evidence="1">Antitermination factor NusB</fullName>
    </alternativeName>
</protein>
<name>NUSB_RICB8</name>
<gene>
    <name evidence="1" type="primary">nusB</name>
    <name type="ordered locus">A1I_01720</name>
</gene>
<reference key="1">
    <citation type="submission" date="2007-09" db="EMBL/GenBank/DDBJ databases">
        <title>Complete genome sequencing of Rickettsia bellii.</title>
        <authorList>
            <person name="Madan A."/>
            <person name="Lee H."/>
            <person name="Madan A."/>
            <person name="Yoon J.-G."/>
            <person name="Ryu G.-Y."/>
            <person name="Dasch G."/>
            <person name="Ereemeva M."/>
        </authorList>
    </citation>
    <scope>NUCLEOTIDE SEQUENCE [LARGE SCALE GENOMIC DNA]</scope>
    <source>
        <strain>OSU 85-389</strain>
    </source>
</reference>
<dbReference type="EMBL" id="CP000849">
    <property type="protein sequence ID" value="ABV78732.1"/>
    <property type="molecule type" value="Genomic_DNA"/>
</dbReference>
<dbReference type="RefSeq" id="WP_011477778.1">
    <property type="nucleotide sequence ID" value="NC_009883.1"/>
</dbReference>
<dbReference type="SMR" id="A8GV61"/>
<dbReference type="KEGG" id="rbo:A1I_01720"/>
<dbReference type="HOGENOM" id="CLU_087843_4_3_5"/>
<dbReference type="GO" id="GO:0005829">
    <property type="term" value="C:cytosol"/>
    <property type="evidence" value="ECO:0007669"/>
    <property type="project" value="TreeGrafter"/>
</dbReference>
<dbReference type="GO" id="GO:0003723">
    <property type="term" value="F:RNA binding"/>
    <property type="evidence" value="ECO:0007669"/>
    <property type="project" value="UniProtKB-UniRule"/>
</dbReference>
<dbReference type="GO" id="GO:0006353">
    <property type="term" value="P:DNA-templated transcription termination"/>
    <property type="evidence" value="ECO:0007669"/>
    <property type="project" value="UniProtKB-UniRule"/>
</dbReference>
<dbReference type="GO" id="GO:0031564">
    <property type="term" value="P:transcription antitermination"/>
    <property type="evidence" value="ECO:0007669"/>
    <property type="project" value="UniProtKB-KW"/>
</dbReference>
<dbReference type="Gene3D" id="1.10.940.10">
    <property type="entry name" value="NusB-like"/>
    <property type="match status" value="1"/>
</dbReference>
<dbReference type="HAMAP" id="MF_00073">
    <property type="entry name" value="NusB"/>
    <property type="match status" value="1"/>
</dbReference>
<dbReference type="InterPro" id="IPR035926">
    <property type="entry name" value="NusB-like_sf"/>
</dbReference>
<dbReference type="InterPro" id="IPR011605">
    <property type="entry name" value="NusB_fam"/>
</dbReference>
<dbReference type="InterPro" id="IPR006027">
    <property type="entry name" value="NusB_RsmB_TIM44"/>
</dbReference>
<dbReference type="NCBIfam" id="TIGR01951">
    <property type="entry name" value="nusB"/>
    <property type="match status" value="1"/>
</dbReference>
<dbReference type="PANTHER" id="PTHR11078:SF3">
    <property type="entry name" value="ANTITERMINATION NUSB DOMAIN-CONTAINING PROTEIN"/>
    <property type="match status" value="1"/>
</dbReference>
<dbReference type="PANTHER" id="PTHR11078">
    <property type="entry name" value="N UTILIZATION SUBSTANCE PROTEIN B-RELATED"/>
    <property type="match status" value="1"/>
</dbReference>
<dbReference type="Pfam" id="PF01029">
    <property type="entry name" value="NusB"/>
    <property type="match status" value="1"/>
</dbReference>
<dbReference type="SUPFAM" id="SSF48013">
    <property type="entry name" value="NusB-like"/>
    <property type="match status" value="1"/>
</dbReference>
<sequence>MSSNKINKKSIARIAAIQAIYQHMLRNNDNIDDIIENVLSFYRNDTSMTDSPIKISLTISHFKMLVKLVFENIDKIDEIISNHLVNDKNQNHIPILLQALLRSGICELLFFPDIPTKVIINEYTDIANDMLNDHEIGFVNSILDKIAHENKRFYDK</sequence>
<organism>
    <name type="scientific">Rickettsia bellii (strain OSU 85-389)</name>
    <dbReference type="NCBI Taxonomy" id="391896"/>
    <lineage>
        <taxon>Bacteria</taxon>
        <taxon>Pseudomonadati</taxon>
        <taxon>Pseudomonadota</taxon>
        <taxon>Alphaproteobacteria</taxon>
        <taxon>Rickettsiales</taxon>
        <taxon>Rickettsiaceae</taxon>
        <taxon>Rickettsieae</taxon>
        <taxon>Rickettsia</taxon>
        <taxon>belli group</taxon>
    </lineage>
</organism>
<evidence type="ECO:0000255" key="1">
    <source>
        <dbReference type="HAMAP-Rule" id="MF_00073"/>
    </source>
</evidence>
<comment type="function">
    <text evidence="1">Involved in transcription antitermination. Required for transcription of ribosomal RNA (rRNA) genes. Binds specifically to the boxA antiterminator sequence of the ribosomal RNA (rrn) operons.</text>
</comment>
<comment type="similarity">
    <text evidence="1">Belongs to the NusB family.</text>
</comment>
<accession>A8GV61</accession>
<keyword id="KW-0694">RNA-binding</keyword>
<keyword id="KW-0804">Transcription</keyword>
<keyword id="KW-0889">Transcription antitermination</keyword>
<keyword id="KW-0805">Transcription regulation</keyword>